<organism>
    <name type="scientific">Pseudomonas syringae pv. maculicola</name>
    <dbReference type="NCBI Taxonomy" id="59511"/>
    <lineage>
        <taxon>Bacteria</taxon>
        <taxon>Pseudomonadati</taxon>
        <taxon>Pseudomonadota</taxon>
        <taxon>Gammaproteobacteria</taxon>
        <taxon>Pseudomonadales</taxon>
        <taxon>Pseudomonadaceae</taxon>
        <taxon>Pseudomonas</taxon>
    </lineage>
</organism>
<reference key="1">
    <citation type="journal article" date="2004" name="J. Bacteriol.">
        <title>Nucleotide sequence and evolution of the five-plasmid complement of the phytopathogen Pseudomonas syringae pv. maculicola ES4326.</title>
        <authorList>
            <person name="Stavrinides J."/>
            <person name="Guttman D.S."/>
        </authorList>
    </citation>
    <scope>NUCLEOTIDE SEQUENCE [GENOMIC DNA]</scope>
    <source>
        <strain>ES4326</strain>
        <plasmid>pPMA4326B</plasmid>
    </source>
</reference>
<name>HOPW2_PSEYM</name>
<gene>
    <name type="primary">hopW1-2</name>
    <name type="synonym">hopPmaA</name>
    <name type="ORF">PMA4326B08</name>
</gene>
<proteinExistence type="inferred from homology"/>
<feature type="chain" id="PRO_0000239716" description="Putative truncated effector protein hopW1-2">
    <location>
        <begin position="1"/>
        <end position="240"/>
    </location>
</feature>
<feature type="region of interest" description="Disordered" evidence="1">
    <location>
        <begin position="1"/>
        <end position="32"/>
    </location>
</feature>
<feature type="compositionally biased region" description="Low complexity" evidence="1">
    <location>
        <begin position="9"/>
        <end position="23"/>
    </location>
</feature>
<accession>Q6J2E6</accession>
<evidence type="ECO:0000256" key="1">
    <source>
        <dbReference type="SAM" id="MobiDB-lite"/>
    </source>
</evidence>
<evidence type="ECO:0000305" key="2"/>
<keyword id="KW-0614">Plasmid</keyword>
<dbReference type="EMBL" id="AY603980">
    <property type="protein sequence ID" value="AAT35175.1"/>
    <property type="molecule type" value="Genomic_DNA"/>
</dbReference>
<dbReference type="RefSeq" id="WP_011178592.1">
    <property type="nucleotide sequence ID" value="NZ_LGLD01000011.1"/>
</dbReference>
<dbReference type="RefSeq" id="YP_025676.1">
    <property type="nucleotide sequence ID" value="NC_005919.1"/>
</dbReference>
<dbReference type="SMR" id="Q6J2E6"/>
<dbReference type="InterPro" id="IPR029378">
    <property type="entry name" value="T3SS_HopW1-1/HolPsyAE"/>
</dbReference>
<dbReference type="Pfam" id="PF15457">
    <property type="entry name" value="HopW1-1"/>
    <property type="match status" value="1"/>
</dbReference>
<geneLocation type="plasmid">
    <name>pPMA4326B</name>
</geneLocation>
<protein>
    <recommendedName>
        <fullName>Putative truncated effector protein hopW1-2</fullName>
    </recommendedName>
</protein>
<sequence>MSPAQIIRTSHSFPPSFTGTSSSAENSHAQSPQQVLTRAFVASGELNAAFGRTSTASAQDFTSLLGTLQRELEKKTPAFPDLAELANQLADAAMGDQGGHWLGRDEQQTLKGMIDRCKSQLAHTPASDASYDLLAQVCENLKKARLHQSISQMTGEAHAKVRGVPDLLALIQLDPDILAEKPVGMPSYVKFSSFICMAKARTAELSENLRNASNEVALLLHPHADTILEQGSLRLQIVGF</sequence>
<comment type="similarity">
    <text evidence="2">Belongs to the HopW family.</text>
</comment>